<evidence type="ECO:0000255" key="1">
    <source>
        <dbReference type="HAMAP-Rule" id="MF_00909"/>
    </source>
</evidence>
<evidence type="ECO:0000256" key="2">
    <source>
        <dbReference type="SAM" id="MobiDB-lite"/>
    </source>
</evidence>
<evidence type="ECO:0000269" key="3">
    <source>
    </source>
</evidence>
<evidence type="ECO:0000303" key="4">
    <source>
    </source>
</evidence>
<evidence type="ECO:0000312" key="5">
    <source>
        <dbReference type="EMBL" id="AAG18937.1"/>
    </source>
</evidence>
<evidence type="ECO:0000312" key="6">
    <source>
        <dbReference type="EMBL" id="DAC77631.1"/>
    </source>
</evidence>
<proteinExistence type="evidence at protein level"/>
<accession>Q9HS71</accession>
<accession>A0A510N4L8</accession>
<keyword id="KW-0131">Cell cycle</keyword>
<keyword id="KW-0132">Cell division</keyword>
<keyword id="KW-0963">Cytoplasm</keyword>
<keyword id="KW-0342">GTP-binding</keyword>
<keyword id="KW-0547">Nucleotide-binding</keyword>
<keyword id="KW-1185">Reference proteome</keyword>
<keyword id="KW-0717">Septation</keyword>
<gene>
    <name evidence="1 4" type="primary">ftsZ1</name>
    <name type="ordered locus">VNG_0376G</name>
</gene>
<name>FTSZ1_HALSA</name>
<protein>
    <recommendedName>
        <fullName evidence="1">Cell division protein FtsZ 1</fullName>
    </recommendedName>
</protein>
<sequence>MDSIVQDAIDEAEESEDSASEPADVAGGGGDTVPTGTMTDNELEDVLQELQTNITVVGCGGAGSNTVDRMATEGIHGADLVAANTDVQHLVDIEADTKILMGQQKTKGRGAGSLPQVGEEAAIESQGEIRDSIAGSDMVFVTAGLGGGTGTGSAPVVAKAAREQGALTIAIVTTPFTAEGEVRRTNAEAGLERLRDVADTVIVVPNDRLLDSVGKLPVREAFKVSDEVLMRSVKGITELITKPGLVNLDFADVRTVMEKGGVAMIGLGEADSDAKAADSVQSALRSPLLDVDISSANSALVNVTGGPGMSIEEAEGVVEQLYDRIDPDARIIWGTSIDEQIQEEMRTMVVVTGVDSPQIYGRNEAAEGDGPAQESTPEPEPEPQAGSEIEDIDYVE</sequence>
<comment type="function">
    <text evidence="1 3">Essential cell division protein that forms a contractile ring structure (Z ring) at the future cell division site. The regulation of the ring assembly controls the timing and the location of cell division. One of the functions of the FtsZ ring is to recruit other cell division proteins to the septum to produce a new cell wall between the dividing cells. Binds GTP and shows GTPase activity (By similarity). FtsZ1 rings form just prior to cell division events (PubMed:32788376).</text>
</comment>
<comment type="subunit">
    <text evidence="1 3">Homodimer. Polymerizes to form a dynamic ring structure in a strictly GTP-dependent manner. Interacts directly with several other division proteins (By similarity). FtsZ1 and FtsZ2 could also form copolymers whose stoichiometry is balanced by CdrS regulation (PubMed:32788376).</text>
</comment>
<comment type="subcellular location">
    <subcellularLocation>
        <location evidence="1">Cytoplasm</location>
    </subcellularLocation>
    <text evidence="1">Assembles at midcell at the inner surface of the cytoplasmic membrane.</text>
</comment>
<comment type="induction">
    <text evidence="3">Expression levels are independent of CdrS regulation and remain relatively constant at different growth rates.</text>
</comment>
<comment type="similarity">
    <text evidence="1">Belongs to the FtsZ family.</text>
</comment>
<organism>
    <name type="scientific">Halobacterium salinarum (strain ATCC 700922 / JCM 11081 / NRC-1)</name>
    <name type="common">Halobacterium halobium</name>
    <dbReference type="NCBI Taxonomy" id="64091"/>
    <lineage>
        <taxon>Archaea</taxon>
        <taxon>Methanobacteriati</taxon>
        <taxon>Methanobacteriota</taxon>
        <taxon>Stenosarchaea group</taxon>
        <taxon>Halobacteria</taxon>
        <taxon>Halobacteriales</taxon>
        <taxon>Halobacteriaceae</taxon>
        <taxon>Halobacterium</taxon>
        <taxon>Halobacterium salinarum NRC-34001</taxon>
    </lineage>
</organism>
<dbReference type="EMBL" id="AE004437">
    <property type="protein sequence ID" value="AAG18937.1"/>
    <property type="molecule type" value="Genomic_DNA"/>
</dbReference>
<dbReference type="EMBL" id="BK010829">
    <property type="protein sequence ID" value="DAC77631.1"/>
    <property type="molecule type" value="Genomic_DNA"/>
</dbReference>
<dbReference type="PIR" id="E84196">
    <property type="entry name" value="E84196"/>
</dbReference>
<dbReference type="SMR" id="Q9HS71"/>
<dbReference type="FunCoup" id="Q9HS71">
    <property type="interactions" value="64"/>
</dbReference>
<dbReference type="STRING" id="64091.VNG_0376G"/>
<dbReference type="PaxDb" id="64091-VNG_0376G"/>
<dbReference type="KEGG" id="hal:VNG_0376G"/>
<dbReference type="PATRIC" id="fig|64091.14.peg.280"/>
<dbReference type="HOGENOM" id="CLU_024865_0_1_2"/>
<dbReference type="InParanoid" id="Q9HS71"/>
<dbReference type="OrthoDB" id="371908at2157"/>
<dbReference type="PhylomeDB" id="Q9HS71"/>
<dbReference type="Proteomes" id="UP000000554">
    <property type="component" value="Chromosome"/>
</dbReference>
<dbReference type="GO" id="GO:0032153">
    <property type="term" value="C:cell division site"/>
    <property type="evidence" value="ECO:0000318"/>
    <property type="project" value="GO_Central"/>
</dbReference>
<dbReference type="GO" id="GO:0005737">
    <property type="term" value="C:cytoplasm"/>
    <property type="evidence" value="ECO:0000318"/>
    <property type="project" value="GO_Central"/>
</dbReference>
<dbReference type="GO" id="GO:0005525">
    <property type="term" value="F:GTP binding"/>
    <property type="evidence" value="ECO:0000318"/>
    <property type="project" value="GO_Central"/>
</dbReference>
<dbReference type="GO" id="GO:0003924">
    <property type="term" value="F:GTPase activity"/>
    <property type="evidence" value="ECO:0000318"/>
    <property type="project" value="GO_Central"/>
</dbReference>
<dbReference type="GO" id="GO:0051301">
    <property type="term" value="P:cell division"/>
    <property type="evidence" value="ECO:0000318"/>
    <property type="project" value="GO_Central"/>
</dbReference>
<dbReference type="GO" id="GO:0043093">
    <property type="term" value="P:FtsZ-dependent cytokinesis"/>
    <property type="evidence" value="ECO:0007669"/>
    <property type="project" value="UniProtKB-UniRule"/>
</dbReference>
<dbReference type="GO" id="GO:0051258">
    <property type="term" value="P:protein polymerization"/>
    <property type="evidence" value="ECO:0007669"/>
    <property type="project" value="UniProtKB-UniRule"/>
</dbReference>
<dbReference type="CDD" id="cd02201">
    <property type="entry name" value="FtsZ_type1"/>
    <property type="match status" value="1"/>
</dbReference>
<dbReference type="FunFam" id="3.40.50.1440:FF:000023">
    <property type="entry name" value="Cell division protein FtsZ"/>
    <property type="match status" value="1"/>
</dbReference>
<dbReference type="Gene3D" id="3.40.50.1440">
    <property type="entry name" value="Tubulin/FtsZ, GTPase domain"/>
    <property type="match status" value="1"/>
</dbReference>
<dbReference type="HAMAP" id="MF_00909">
    <property type="entry name" value="FtsZ"/>
    <property type="match status" value="1"/>
</dbReference>
<dbReference type="InterPro" id="IPR000158">
    <property type="entry name" value="Cell_div_FtsZ"/>
</dbReference>
<dbReference type="InterPro" id="IPR020805">
    <property type="entry name" value="Cell_div_FtsZ_CS"/>
</dbReference>
<dbReference type="InterPro" id="IPR045061">
    <property type="entry name" value="FtsZ/CetZ"/>
</dbReference>
<dbReference type="InterPro" id="IPR024757">
    <property type="entry name" value="FtsZ_C"/>
</dbReference>
<dbReference type="InterPro" id="IPR008280">
    <property type="entry name" value="Tub_FtsZ_C"/>
</dbReference>
<dbReference type="InterPro" id="IPR018316">
    <property type="entry name" value="Tubulin/FtsZ_2-layer-sand-dom"/>
</dbReference>
<dbReference type="InterPro" id="IPR036525">
    <property type="entry name" value="Tubulin/FtsZ_GTPase_sf"/>
</dbReference>
<dbReference type="InterPro" id="IPR003008">
    <property type="entry name" value="Tubulin_FtsZ_GTPase"/>
</dbReference>
<dbReference type="NCBIfam" id="TIGR00065">
    <property type="entry name" value="ftsZ"/>
    <property type="match status" value="1"/>
</dbReference>
<dbReference type="PANTHER" id="PTHR30314">
    <property type="entry name" value="CELL DIVISION PROTEIN FTSZ-RELATED"/>
    <property type="match status" value="1"/>
</dbReference>
<dbReference type="PANTHER" id="PTHR30314:SF3">
    <property type="entry name" value="MITOCHONDRIAL DIVISION PROTEIN FSZA"/>
    <property type="match status" value="1"/>
</dbReference>
<dbReference type="Pfam" id="PF12327">
    <property type="entry name" value="FtsZ_C"/>
    <property type="match status" value="1"/>
</dbReference>
<dbReference type="Pfam" id="PF00091">
    <property type="entry name" value="Tubulin"/>
    <property type="match status" value="1"/>
</dbReference>
<dbReference type="PRINTS" id="PR00423">
    <property type="entry name" value="CELLDVISFTSZ"/>
</dbReference>
<dbReference type="SMART" id="SM00864">
    <property type="entry name" value="Tubulin"/>
    <property type="match status" value="1"/>
</dbReference>
<dbReference type="SMART" id="SM00865">
    <property type="entry name" value="Tubulin_C"/>
    <property type="match status" value="1"/>
</dbReference>
<dbReference type="SUPFAM" id="SSF55307">
    <property type="entry name" value="Tubulin C-terminal domain-like"/>
    <property type="match status" value="1"/>
</dbReference>
<dbReference type="SUPFAM" id="SSF52490">
    <property type="entry name" value="Tubulin nucleotide-binding domain-like"/>
    <property type="match status" value="1"/>
</dbReference>
<dbReference type="PROSITE" id="PS01134">
    <property type="entry name" value="FTSZ_1"/>
    <property type="match status" value="1"/>
</dbReference>
<dbReference type="PROSITE" id="PS01135">
    <property type="entry name" value="FTSZ_2"/>
    <property type="match status" value="1"/>
</dbReference>
<reference evidence="5" key="1">
    <citation type="journal article" date="2000" name="Proc. Natl. Acad. Sci. U.S.A.">
        <title>Genome sequence of Halobacterium species NRC-1.</title>
        <authorList>
            <person name="Ng W.V."/>
            <person name="Kennedy S.P."/>
            <person name="Mahairas G.G."/>
            <person name="Berquist B."/>
            <person name="Pan M."/>
            <person name="Shukla H.D."/>
            <person name="Lasky S.R."/>
            <person name="Baliga N.S."/>
            <person name="Thorsson V."/>
            <person name="Sbrogna J."/>
            <person name="Swartzell S."/>
            <person name="Weir D."/>
            <person name="Hall J."/>
            <person name="Dahl T.A."/>
            <person name="Welti R."/>
            <person name="Goo Y.A."/>
            <person name="Leithauser B."/>
            <person name="Keller K."/>
            <person name="Cruz R."/>
            <person name="Danson M.J."/>
            <person name="Hough D.W."/>
            <person name="Maddocks D.G."/>
            <person name="Jablonski P.E."/>
            <person name="Krebs M.P."/>
            <person name="Angevine C.M."/>
            <person name="Dale H."/>
            <person name="Isenbarger T.A."/>
            <person name="Peck R.F."/>
            <person name="Pohlschroder M."/>
            <person name="Spudich J.L."/>
            <person name="Jung K.-H."/>
            <person name="Alam M."/>
            <person name="Freitas T."/>
            <person name="Hou S."/>
            <person name="Daniels C.J."/>
            <person name="Dennis P.P."/>
            <person name="Omer A.D."/>
            <person name="Ebhardt H."/>
            <person name="Lowe T.M."/>
            <person name="Liang P."/>
            <person name="Riley M."/>
            <person name="Hood L."/>
            <person name="DasSarma S."/>
        </authorList>
    </citation>
    <scope>NUCLEOTIDE SEQUENCE [LARGE SCALE GENOMIC DNA]</scope>
    <source>
        <strain>ATCC 700922 / JCM 11081 / NRC-1</strain>
    </source>
</reference>
<reference evidence="6" key="2">
    <citation type="journal article" date="2019" name="Microbiol. Resour. Announc.">
        <title>The Genome Sequence of the Halobacterium salinarum Type Strain Is Closely Related to That of Laboratory Strains NRC-1 and R1.</title>
        <authorList>
            <person name="Pfeiffer F."/>
            <person name="Marchfelder A."/>
            <person name="Habermann B."/>
            <person name="Dyall-Smith M.L."/>
        </authorList>
    </citation>
    <scope>GENOME REANNOTATION</scope>
    <source>
        <strain>ATCC 700922 / JCM 11081 / NRC-1</strain>
    </source>
</reference>
<reference key="3">
    <citation type="journal article" date="2020" name="MBio">
        <title>The Ribbon-Helix-Helix Domain Protein CdrS Regulates the Tubulin Homolog ftsZ2 To Control Cell Division in Archaea.</title>
        <authorList>
            <person name="Darnell C.L."/>
            <person name="Zheng J."/>
            <person name="Wilson S."/>
            <person name="Bertoli R.M."/>
            <person name="Bisson-Filho A.W."/>
            <person name="Garner E.C."/>
            <person name="Schmid A.K."/>
        </authorList>
    </citation>
    <scope>FUNCTION</scope>
    <scope>SUBUNIT</scope>
    <scope>INDUCTION</scope>
    <source>
        <strain>ATCC 700922 / JCM 11081 / NRC-1</strain>
    </source>
</reference>
<feature type="chain" id="PRO_0000414239" description="Cell division protein FtsZ 1">
    <location>
        <begin position="1"/>
        <end position="396"/>
    </location>
</feature>
<feature type="region of interest" description="Disordered" evidence="2">
    <location>
        <begin position="1"/>
        <end position="38"/>
    </location>
</feature>
<feature type="region of interest" description="Disordered" evidence="2">
    <location>
        <begin position="358"/>
        <end position="396"/>
    </location>
</feature>
<feature type="compositionally biased region" description="Acidic residues" evidence="2">
    <location>
        <begin position="8"/>
        <end position="19"/>
    </location>
</feature>
<feature type="binding site" evidence="1">
    <location>
        <begin position="61"/>
        <end position="65"/>
    </location>
    <ligand>
        <name>GTP</name>
        <dbReference type="ChEBI" id="CHEBI:37565"/>
    </ligand>
</feature>
<feature type="binding site" evidence="1">
    <location>
        <begin position="148"/>
        <end position="150"/>
    </location>
    <ligand>
        <name>GTP</name>
        <dbReference type="ChEBI" id="CHEBI:37565"/>
    </ligand>
</feature>
<feature type="binding site" evidence="1">
    <location>
        <position position="179"/>
    </location>
    <ligand>
        <name>GTP</name>
        <dbReference type="ChEBI" id="CHEBI:37565"/>
    </ligand>
</feature>
<feature type="binding site" evidence="1">
    <location>
        <position position="183"/>
    </location>
    <ligand>
        <name>GTP</name>
        <dbReference type="ChEBI" id="CHEBI:37565"/>
    </ligand>
</feature>
<feature type="binding site" evidence="1">
    <location>
        <position position="226"/>
    </location>
    <ligand>
        <name>GTP</name>
        <dbReference type="ChEBI" id="CHEBI:37565"/>
    </ligand>
</feature>